<geneLocation type="plasmid">
    <name>pSymB</name>
    <name>megaplasmid 2</name>
</geneLocation>
<name>EXOK_RHIME</name>
<proteinExistence type="evidence at protein level"/>
<gene>
    <name type="primary">exoK</name>
    <name type="ordered locus">RB1080</name>
    <name type="ORF">SMb20955</name>
</gene>
<feature type="signal peptide" evidence="1">
    <location>
        <begin position="1"/>
        <end position="29"/>
    </location>
</feature>
<feature type="chain" id="PRO_0000011799" description="Endo-1,3-1,4-beta-glycanase ExoK">
    <location>
        <begin position="30"/>
        <end position="269"/>
    </location>
</feature>
<feature type="domain" description="GH16" evidence="2">
    <location>
        <begin position="40"/>
        <end position="252"/>
    </location>
</feature>
<feature type="active site" description="Nucleophile" evidence="3">
    <location>
        <position position="138"/>
    </location>
</feature>
<feature type="active site" description="Proton donor" evidence="3">
    <location>
        <position position="142"/>
    </location>
</feature>
<accession>P33693</accession>
<reference key="1">
    <citation type="journal article" date="1993" name="J. Bacteriol.">
        <title>Family of glycosyl transferases needed for the synthesis of succinoglycan by Rhizobium meliloti.</title>
        <authorList>
            <person name="Glucksmann M.A."/>
            <person name="Reuber T.L."/>
            <person name="Walker G.C."/>
        </authorList>
    </citation>
    <scope>NUCLEOTIDE SEQUENCE [GENOMIC DNA]</scope>
    <source>
        <strain>1021</strain>
    </source>
</reference>
<reference key="2">
    <citation type="journal article" date="1993" name="Mol. Gen. Genet.">
        <title>Analysis of the Rhizobium meliloti exoH/exoK/exoL fragment: ExoK shows homology to excreted endo-beta-1,3-1,4-glucanases and ExoH resembles membrane proteins.</title>
        <authorList>
            <person name="Becker A."/>
            <person name="Kleickmann A."/>
            <person name="Arnold W."/>
            <person name="Puehler A."/>
        </authorList>
    </citation>
    <scope>NUCLEOTIDE SEQUENCE [GENOMIC DNA]</scope>
    <source>
        <strain>RCR2011 / SU47</strain>
    </source>
</reference>
<reference key="3">
    <citation type="journal article" date="2001" name="Proc. Natl. Acad. Sci. U.S.A.">
        <title>The complete sequence of the 1,683-kb pSymB megaplasmid from the N2-fixing endosymbiont Sinorhizobium meliloti.</title>
        <authorList>
            <person name="Finan T.M."/>
            <person name="Weidner S."/>
            <person name="Wong K."/>
            <person name="Buhrmester J."/>
            <person name="Chain P."/>
            <person name="Vorhoelter F.J."/>
            <person name="Hernandez-Lucas I."/>
            <person name="Becker A."/>
            <person name="Cowie A."/>
            <person name="Gouzy J."/>
            <person name="Golding B."/>
            <person name="Puehler A."/>
        </authorList>
    </citation>
    <scope>NUCLEOTIDE SEQUENCE [LARGE SCALE GENOMIC DNA]</scope>
    <source>
        <strain>1021</strain>
    </source>
</reference>
<reference key="4">
    <citation type="journal article" date="2001" name="Science">
        <title>The composite genome of the legume symbiont Sinorhizobium meliloti.</title>
        <authorList>
            <person name="Galibert F."/>
            <person name="Finan T.M."/>
            <person name="Long S.R."/>
            <person name="Puehler A."/>
            <person name="Abola P."/>
            <person name="Ampe F."/>
            <person name="Barloy-Hubler F."/>
            <person name="Barnett M.J."/>
            <person name="Becker A."/>
            <person name="Boistard P."/>
            <person name="Bothe G."/>
            <person name="Boutry M."/>
            <person name="Bowser L."/>
            <person name="Buhrmester J."/>
            <person name="Cadieu E."/>
            <person name="Capela D."/>
            <person name="Chain P."/>
            <person name="Cowie A."/>
            <person name="Davis R.W."/>
            <person name="Dreano S."/>
            <person name="Federspiel N.A."/>
            <person name="Fisher R.F."/>
            <person name="Gloux S."/>
            <person name="Godrie T."/>
            <person name="Goffeau A."/>
            <person name="Golding B."/>
            <person name="Gouzy J."/>
            <person name="Gurjal M."/>
            <person name="Hernandez-Lucas I."/>
            <person name="Hong A."/>
            <person name="Huizar L."/>
            <person name="Hyman R.W."/>
            <person name="Jones T."/>
            <person name="Kahn D."/>
            <person name="Kahn M.L."/>
            <person name="Kalman S."/>
            <person name="Keating D.H."/>
            <person name="Kiss E."/>
            <person name="Komp C."/>
            <person name="Lelaure V."/>
            <person name="Masuy D."/>
            <person name="Palm C."/>
            <person name="Peck M.C."/>
            <person name="Pohl T.M."/>
            <person name="Portetelle D."/>
            <person name="Purnelle B."/>
            <person name="Ramsperger U."/>
            <person name="Surzycki R."/>
            <person name="Thebault P."/>
            <person name="Vandenbol M."/>
            <person name="Vorhoelter F.J."/>
            <person name="Weidner S."/>
            <person name="Wells D.H."/>
            <person name="Wong K."/>
            <person name="Yeh K.-C."/>
            <person name="Batut J."/>
        </authorList>
    </citation>
    <scope>NUCLEOTIDE SEQUENCE [LARGE SCALE GENOMIC DNA]</scope>
    <source>
        <strain>1021</strain>
    </source>
</reference>
<reference key="5">
    <citation type="journal article" date="1997" name="Mol. Microbiol.">
        <title>The Rhizobium meliloti exoK gene and prsD/prsE/exsH genes encode components of independent degradative pathways which contribute to production of low-molecular-weight succinoglycan.</title>
        <authorList>
            <person name="York G.M."/>
            <person name="Walker G.C."/>
        </authorList>
    </citation>
    <scope>FUNCTION</scope>
    <source>
        <strain>1021</strain>
    </source>
</reference>
<reference key="6">
    <citation type="journal article" date="1998" name="Proc. Natl. Acad. Sci. U.S.A.">
        <title>The Rhizobium meliloti ExoK and ExsH glycanases specifically depolymerize nascent succinoglycan chains.</title>
        <authorList>
            <person name="York G.M."/>
            <person name="Walker G.C."/>
        </authorList>
    </citation>
    <scope>FUNCTION</scope>
    <scope>PATHWAY</scope>
    <scope>SUBCELLULAR LOCATION</scope>
    <scope>CHARACTERIZATION</scope>
    <source>
        <strain>1021</strain>
    </source>
</reference>
<keyword id="KW-0270">Exopolysaccharide synthesis</keyword>
<keyword id="KW-0326">Glycosidase</keyword>
<keyword id="KW-0378">Hydrolase</keyword>
<keyword id="KW-0614">Plasmid</keyword>
<keyword id="KW-1185">Reference proteome</keyword>
<keyword id="KW-0964">Secreted</keyword>
<keyword id="KW-0732">Signal</keyword>
<evidence type="ECO:0000255" key="1"/>
<evidence type="ECO:0000255" key="2">
    <source>
        <dbReference type="PROSITE-ProRule" id="PRU01098"/>
    </source>
</evidence>
<evidence type="ECO:0000255" key="3">
    <source>
        <dbReference type="PROSITE-ProRule" id="PRU10064"/>
    </source>
</evidence>
<evidence type="ECO:0000269" key="4">
    <source>
    </source>
</evidence>
<evidence type="ECO:0000269" key="5">
    <source>
    </source>
</evidence>
<evidence type="ECO:0000305" key="6"/>
<comment type="function">
    <text evidence="4 5">Cleaves high molecular weight succinoglycan to yield LMW succinoglycan. Dynamically regulates the molecular weight distribution of succinoglycan by cleaving nascent succinoglycan only during a limited period after its synthesis, perhaps before it undergoes a time-dependent change in its conformation or aggregation state.</text>
</comment>
<comment type="pathway">
    <text evidence="5">Glycan metabolism; exopolysaccharide biosynthesis.</text>
</comment>
<comment type="subcellular location">
    <subcellularLocation>
        <location evidence="5">Secreted</location>
    </subcellularLocation>
</comment>
<comment type="similarity">
    <text evidence="6">Belongs to the glycosyl hydrolase 16 family.</text>
</comment>
<sequence length="269" mass="30084">MTIDRYRRFARLAFIATLPLAGLATAAAAQEGANGKSFKDDFDTLDTRVWFVSDGWNNGGHQNCTWSKKQVKTVDGILELTFEEKKVKERNFACGEIQTRKRFGYGTYEARIKAADGSGLNSAFFTYIGPADKKPHDEIDFEVLGKNTAKVQINQYVSAKGGNEFLADVPGGANQGFNDYAFVWEKNRIRYYVNGELVHEVTDPAKIPVNAQKIFFSLWGTDTLTDWMGTFSYKEPTKLQVDRVAFTAAGDECQFAESVACQLERAQSE</sequence>
<organism>
    <name type="scientific">Rhizobium meliloti (strain 1021)</name>
    <name type="common">Ensifer meliloti</name>
    <name type="synonym">Sinorhizobium meliloti</name>
    <dbReference type="NCBI Taxonomy" id="266834"/>
    <lineage>
        <taxon>Bacteria</taxon>
        <taxon>Pseudomonadati</taxon>
        <taxon>Pseudomonadota</taxon>
        <taxon>Alphaproteobacteria</taxon>
        <taxon>Hyphomicrobiales</taxon>
        <taxon>Rhizobiaceae</taxon>
        <taxon>Sinorhizobium/Ensifer group</taxon>
        <taxon>Sinorhizobium</taxon>
    </lineage>
</organism>
<dbReference type="EC" id="3.2.1.-"/>
<dbReference type="EMBL" id="L20758">
    <property type="protein sequence ID" value="AAA16048.1"/>
    <property type="molecule type" value="Unassigned_DNA"/>
</dbReference>
<dbReference type="EMBL" id="Z17219">
    <property type="protein sequence ID" value="CAA78927.1"/>
    <property type="molecule type" value="Genomic_DNA"/>
</dbReference>
<dbReference type="EMBL" id="AL591985">
    <property type="protein sequence ID" value="CAC49480.1"/>
    <property type="molecule type" value="Genomic_DNA"/>
</dbReference>
<dbReference type="PIR" id="H95976">
    <property type="entry name" value="H95976"/>
</dbReference>
<dbReference type="PIR" id="S34804">
    <property type="entry name" value="S34804"/>
</dbReference>
<dbReference type="RefSeq" id="NP_437620.1">
    <property type="nucleotide sequence ID" value="NC_003078.1"/>
</dbReference>
<dbReference type="RefSeq" id="WP_010975917.1">
    <property type="nucleotide sequence ID" value="NC_003078.1"/>
</dbReference>
<dbReference type="SMR" id="P33693"/>
<dbReference type="CAZy" id="GH16">
    <property type="family name" value="Glycoside Hydrolase Family 16"/>
</dbReference>
<dbReference type="EnsemblBacteria" id="CAC49480">
    <property type="protein sequence ID" value="CAC49480"/>
    <property type="gene ID" value="SM_b20955"/>
</dbReference>
<dbReference type="GeneID" id="89577821"/>
<dbReference type="KEGG" id="sme:SM_b20955"/>
<dbReference type="PATRIC" id="fig|266834.11.peg.6008"/>
<dbReference type="eggNOG" id="COG2273">
    <property type="taxonomic scope" value="Bacteria"/>
</dbReference>
<dbReference type="HOGENOM" id="CLU_071026_0_0_5"/>
<dbReference type="OrthoDB" id="9809583at2"/>
<dbReference type="UniPathway" id="UPA00631"/>
<dbReference type="PRO" id="PR:P33693"/>
<dbReference type="Proteomes" id="UP000001976">
    <property type="component" value="Plasmid pSymB"/>
</dbReference>
<dbReference type="GO" id="GO:0005576">
    <property type="term" value="C:extracellular region"/>
    <property type="evidence" value="ECO:0007669"/>
    <property type="project" value="UniProtKB-SubCell"/>
</dbReference>
<dbReference type="GO" id="GO:0004553">
    <property type="term" value="F:hydrolase activity, hydrolyzing O-glycosyl compounds"/>
    <property type="evidence" value="ECO:0007669"/>
    <property type="project" value="InterPro"/>
</dbReference>
<dbReference type="GO" id="GO:0000271">
    <property type="term" value="P:polysaccharide biosynthetic process"/>
    <property type="evidence" value="ECO:0007669"/>
    <property type="project" value="UniProtKB-KW"/>
</dbReference>
<dbReference type="CDD" id="cd02175">
    <property type="entry name" value="GH16_lichenase"/>
    <property type="match status" value="1"/>
</dbReference>
<dbReference type="Gene3D" id="2.60.120.200">
    <property type="match status" value="1"/>
</dbReference>
<dbReference type="InterPro" id="IPR008264">
    <property type="entry name" value="Beta_glucanase"/>
</dbReference>
<dbReference type="InterPro" id="IPR013320">
    <property type="entry name" value="ConA-like_dom_sf"/>
</dbReference>
<dbReference type="InterPro" id="IPR000757">
    <property type="entry name" value="GH16"/>
</dbReference>
<dbReference type="InterPro" id="IPR008263">
    <property type="entry name" value="GH16_AS"/>
</dbReference>
<dbReference type="InterPro" id="IPR050546">
    <property type="entry name" value="Glycosyl_Hydrlase_16"/>
</dbReference>
<dbReference type="PANTHER" id="PTHR10963:SF55">
    <property type="entry name" value="GLYCOSIDE HYDROLASE FAMILY 16 PROTEIN"/>
    <property type="match status" value="1"/>
</dbReference>
<dbReference type="PANTHER" id="PTHR10963">
    <property type="entry name" value="GLYCOSYL HYDROLASE-RELATED"/>
    <property type="match status" value="1"/>
</dbReference>
<dbReference type="Pfam" id="PF00722">
    <property type="entry name" value="Glyco_hydro_16"/>
    <property type="match status" value="1"/>
</dbReference>
<dbReference type="PRINTS" id="PR00737">
    <property type="entry name" value="GLHYDRLASE16"/>
</dbReference>
<dbReference type="SUPFAM" id="SSF49899">
    <property type="entry name" value="Concanavalin A-like lectins/glucanases"/>
    <property type="match status" value="1"/>
</dbReference>
<dbReference type="PROSITE" id="PS01034">
    <property type="entry name" value="GH16_1"/>
    <property type="match status" value="1"/>
</dbReference>
<dbReference type="PROSITE" id="PS51762">
    <property type="entry name" value="GH16_2"/>
    <property type="match status" value="1"/>
</dbReference>
<protein>
    <recommendedName>
        <fullName>Endo-1,3-1,4-beta-glycanase ExoK</fullName>
        <ecNumber>3.2.1.-</ecNumber>
    </recommendedName>
    <alternativeName>
        <fullName>Succinoglycan biosynthesis protein ExoK</fullName>
    </alternativeName>
</protein>